<evidence type="ECO:0000255" key="1">
    <source>
        <dbReference type="PROSITE-ProRule" id="PRU00465"/>
    </source>
</evidence>
<evidence type="ECO:0000255" key="2">
    <source>
        <dbReference type="PROSITE-ProRule" id="PRU00716"/>
    </source>
</evidence>
<evidence type="ECO:0000269" key="3">
    <source>
    </source>
</evidence>
<evidence type="ECO:0000269" key="4">
    <source>
    </source>
</evidence>
<evidence type="ECO:0000305" key="5"/>
<dbReference type="EC" id="1.14.12.15" evidence="4"/>
<dbReference type="EMBL" id="AB238679">
    <property type="protein sequence ID" value="BAE47088.1"/>
    <property type="molecule type" value="Genomic_DNA"/>
</dbReference>
<dbReference type="RefSeq" id="WP_019043840.1">
    <property type="nucleotide sequence ID" value="NZ_SPET01000024.1"/>
</dbReference>
<dbReference type="SMR" id="Q3C1D2"/>
<dbReference type="GO" id="GO:0051537">
    <property type="term" value="F:2 iron, 2 sulfur cluster binding"/>
    <property type="evidence" value="ECO:0007669"/>
    <property type="project" value="UniProtKB-KW"/>
</dbReference>
<dbReference type="GO" id="GO:0046872">
    <property type="term" value="F:metal ion binding"/>
    <property type="evidence" value="ECO:0007669"/>
    <property type="project" value="UniProtKB-KW"/>
</dbReference>
<dbReference type="GO" id="GO:0070402">
    <property type="term" value="F:NADPH binding"/>
    <property type="evidence" value="ECO:0000314"/>
    <property type="project" value="UniProtKB"/>
</dbReference>
<dbReference type="GO" id="GO:0018628">
    <property type="term" value="F:terephthalate 1,2-dioxygenase activity"/>
    <property type="evidence" value="ECO:0000314"/>
    <property type="project" value="UniProtKB"/>
</dbReference>
<dbReference type="GO" id="GO:0018963">
    <property type="term" value="P:phthalate metabolic process"/>
    <property type="evidence" value="ECO:0000314"/>
    <property type="project" value="UniProtKB"/>
</dbReference>
<dbReference type="CDD" id="cd00207">
    <property type="entry name" value="fer2"/>
    <property type="match status" value="1"/>
</dbReference>
<dbReference type="CDD" id="cd06189">
    <property type="entry name" value="flavin_oxioreductase"/>
    <property type="match status" value="1"/>
</dbReference>
<dbReference type="FunFam" id="3.40.50.80:FF:000108">
    <property type="entry name" value="Terephthalate 1,2-dioxygenase, reductase component 2"/>
    <property type="match status" value="1"/>
</dbReference>
<dbReference type="Gene3D" id="3.10.20.30">
    <property type="match status" value="1"/>
</dbReference>
<dbReference type="Gene3D" id="3.40.50.80">
    <property type="entry name" value="Nucleotide-binding domain of ferredoxin-NADP reductase (FNR) module"/>
    <property type="match status" value="1"/>
</dbReference>
<dbReference type="Gene3D" id="2.40.30.10">
    <property type="entry name" value="Translation factors"/>
    <property type="match status" value="1"/>
</dbReference>
<dbReference type="InterPro" id="IPR036010">
    <property type="entry name" value="2Fe-2S_ferredoxin-like_sf"/>
</dbReference>
<dbReference type="InterPro" id="IPR001041">
    <property type="entry name" value="2Fe-2S_ferredoxin-type"/>
</dbReference>
<dbReference type="InterPro" id="IPR006058">
    <property type="entry name" value="2Fe2S_fd_BS"/>
</dbReference>
<dbReference type="InterPro" id="IPR012675">
    <property type="entry name" value="Beta-grasp_dom_sf"/>
</dbReference>
<dbReference type="InterPro" id="IPR008333">
    <property type="entry name" value="Cbr1-like_FAD-bd_dom"/>
</dbReference>
<dbReference type="InterPro" id="IPR017927">
    <property type="entry name" value="FAD-bd_FR_type"/>
</dbReference>
<dbReference type="InterPro" id="IPR039261">
    <property type="entry name" value="FNR_nucleotide-bd"/>
</dbReference>
<dbReference type="InterPro" id="IPR050415">
    <property type="entry name" value="MRET"/>
</dbReference>
<dbReference type="InterPro" id="IPR001433">
    <property type="entry name" value="OxRdtase_FAD/NAD-bd"/>
</dbReference>
<dbReference type="InterPro" id="IPR017938">
    <property type="entry name" value="Riboflavin_synthase-like_b-brl"/>
</dbReference>
<dbReference type="PANTHER" id="PTHR47354">
    <property type="entry name" value="NADH OXIDOREDUCTASE HCR"/>
    <property type="match status" value="1"/>
</dbReference>
<dbReference type="PANTHER" id="PTHR47354:SF5">
    <property type="entry name" value="PROTEIN RFBI"/>
    <property type="match status" value="1"/>
</dbReference>
<dbReference type="Pfam" id="PF00970">
    <property type="entry name" value="FAD_binding_6"/>
    <property type="match status" value="1"/>
</dbReference>
<dbReference type="Pfam" id="PF00111">
    <property type="entry name" value="Fer2"/>
    <property type="match status" value="1"/>
</dbReference>
<dbReference type="Pfam" id="PF00175">
    <property type="entry name" value="NAD_binding_1"/>
    <property type="match status" value="1"/>
</dbReference>
<dbReference type="PRINTS" id="PR00410">
    <property type="entry name" value="PHEHYDRXLASE"/>
</dbReference>
<dbReference type="SUPFAM" id="SSF54292">
    <property type="entry name" value="2Fe-2S ferredoxin-like"/>
    <property type="match status" value="1"/>
</dbReference>
<dbReference type="SUPFAM" id="SSF52343">
    <property type="entry name" value="Ferredoxin reductase-like, C-terminal NADP-linked domain"/>
    <property type="match status" value="1"/>
</dbReference>
<dbReference type="SUPFAM" id="SSF63380">
    <property type="entry name" value="Riboflavin synthase domain-like"/>
    <property type="match status" value="1"/>
</dbReference>
<dbReference type="PROSITE" id="PS00197">
    <property type="entry name" value="2FE2S_FER_1"/>
    <property type="match status" value="1"/>
</dbReference>
<dbReference type="PROSITE" id="PS51085">
    <property type="entry name" value="2FE2S_FER_2"/>
    <property type="match status" value="1"/>
</dbReference>
<dbReference type="PROSITE" id="PS51384">
    <property type="entry name" value="FAD_FR"/>
    <property type="match status" value="1"/>
</dbReference>
<sequence>MNHQIHIHDSDIAFPCAPGQSVLDAALQAGIELPYSCRKGSCGNCASTLLDGNIASFNGMAVRNELCASEQVLLCGCTAASDIRIHPSSFRRLDPEARKRFTAKVYSNTLAAPDVSLLRLRLPVGKRAKFEAGQYLLIHLDDGESRSYSMANPPHESDGITLHVRHVPGGRFSTIVQQLKSGDTLDIELPFGSIALKPDDARPLICVAGGTGFAPIKSVLDDLAKRKVQRDITLIWGARNPSGLYLPSAIDKWRKVWPQFRYIAAITDLGDMPADAHAGRVDDALRTHFGNLHDHVVHCCGSPALVQSVRTAASDMGLLAQDFHADVFATGPTGHH</sequence>
<name>TPDR2_COMSP</name>
<accession>Q3C1D2</accession>
<keyword id="KW-0001">2Fe-2S</keyword>
<keyword id="KW-0223">Dioxygenase</keyword>
<keyword id="KW-0408">Iron</keyword>
<keyword id="KW-0411">Iron-sulfur</keyword>
<keyword id="KW-0479">Metal-binding</keyword>
<keyword id="KW-0520">NAD</keyword>
<keyword id="KW-0560">Oxidoreductase</keyword>
<organism>
    <name type="scientific">Comamonas sp</name>
    <dbReference type="NCBI Taxonomy" id="34028"/>
    <lineage>
        <taxon>Bacteria</taxon>
        <taxon>Pseudomonadati</taxon>
        <taxon>Pseudomonadota</taxon>
        <taxon>Betaproteobacteria</taxon>
        <taxon>Burkholderiales</taxon>
        <taxon>Comamonadaceae</taxon>
        <taxon>Comamonas</taxon>
    </lineage>
</organism>
<proteinExistence type="evidence at protein level"/>
<comment type="function">
    <text evidence="3 4">Component of the terephthalate 1,2-dioxygenase multicomponent enzyme system which catalyzes the dioxygenation of terephthalate (TER/TPA) to 1,2-dihydroxy-3,5-cyclohexadiene-1,4-dicarboxylic acid (DCD). TphA1 probably reduces TphA2A3. It can also use 2,5-dicarboxypyridine (PDC) and 1,4-napthalenedicarboxylic acid (NDC) as substrates, and preferentially uses NADPH which is the physiological electron donor.</text>
</comment>
<comment type="catalytic activity">
    <reaction evidence="4">
        <text>terephthalate + NADH + O2 + H(+) = (3S,4R)-3,4-dihydroxycyclohexa-1,5-diene-1,4-dicarboxylate + NAD(+)</text>
        <dbReference type="Rhea" id="RHEA:10312"/>
        <dbReference type="ChEBI" id="CHEBI:15378"/>
        <dbReference type="ChEBI" id="CHEBI:15379"/>
        <dbReference type="ChEBI" id="CHEBI:30043"/>
        <dbReference type="ChEBI" id="CHEBI:57412"/>
        <dbReference type="ChEBI" id="CHEBI:57540"/>
        <dbReference type="ChEBI" id="CHEBI:57945"/>
        <dbReference type="EC" id="1.14.12.15"/>
    </reaction>
</comment>
<comment type="cofactor">
    <cofactor evidence="5">
        <name>FAD</name>
        <dbReference type="ChEBI" id="CHEBI:57692"/>
    </cofactor>
    <text evidence="5">Binds 1 FAD per subunit.</text>
</comment>
<comment type="cofactor">
    <cofactor evidence="5">
        <name>[2Fe-2S] cluster</name>
        <dbReference type="ChEBI" id="CHEBI:190135"/>
    </cofactor>
    <text evidence="5">Binds 1 [2Fe-2S] cluster per subunit.</text>
</comment>
<comment type="biophysicochemical properties">
    <kinetics>
        <KM evidence="4">72 uM for TPA (at 30 degrees Celsius and at ph 7)</KM>
        <Vmax evidence="4">9.87 umol/min/mg enzyme with TPA as substrate (at 30 degrees Celsius and at ph 7)</Vmax>
    </kinetics>
    <phDependence>
        <text evidence="4">Optimum pH is 7. About 20% of maximum TPADO activity is observed at pH 9, whereas no activity is observed at pH 5.</text>
    </phDependence>
    <temperatureDependence>
        <text evidence="4">Optimum temperature is 30 degrees Celsius. Approximately 60% of maximum TPADO activity is observed at 15 degrees Celsius, and activity is completely lost at 50 degrees Celsius.</text>
    </temperatureDependence>
</comment>
<comment type="subunit">
    <text evidence="3 4">Monomer. Part of a multicomponent enzyme system composed of a reductase (TphA1I or TphA1II) and a two-subunit oxygenase component (TphA2I or TphA2II and TphA3I or TphA3II).</text>
</comment>
<gene>
    <name type="primary">tphA1II</name>
</gene>
<protein>
    <recommendedName>
        <fullName>Terephthalate 1,2-dioxygenase, reductase component 2</fullName>
    </recommendedName>
    <alternativeName>
        <fullName>TER dioxygenase system</fullName>
        <shortName>TERDOS</shortName>
    </alternativeName>
    <alternativeName>
        <fullName>TPADO reductase component</fullName>
        <ecNumber evidence="4">1.14.12.15</ecNumber>
    </alternativeName>
</protein>
<feature type="chain" id="PRO_0000419001" description="Terephthalate 1,2-dioxygenase, reductase component 2">
    <location>
        <begin position="1"/>
        <end position="336"/>
    </location>
</feature>
<feature type="domain" description="2Fe-2S ferredoxin-type" evidence="1">
    <location>
        <begin position="3"/>
        <end position="91"/>
    </location>
</feature>
<feature type="domain" description="FAD-binding FR-type" evidence="2">
    <location>
        <begin position="98"/>
        <end position="197"/>
    </location>
</feature>
<feature type="binding site" evidence="5">
    <location>
        <position position="37"/>
    </location>
    <ligand>
        <name>[2Fe-2S] cluster</name>
        <dbReference type="ChEBI" id="CHEBI:190135"/>
    </ligand>
</feature>
<feature type="binding site" evidence="5">
    <location>
        <position position="42"/>
    </location>
    <ligand>
        <name>[2Fe-2S] cluster</name>
        <dbReference type="ChEBI" id="CHEBI:190135"/>
    </ligand>
</feature>
<feature type="binding site" evidence="5">
    <location>
        <position position="45"/>
    </location>
    <ligand>
        <name>[2Fe-2S] cluster</name>
        <dbReference type="ChEBI" id="CHEBI:190135"/>
    </ligand>
</feature>
<feature type="binding site" evidence="5">
    <location>
        <position position="75"/>
    </location>
    <ligand>
        <name>[2Fe-2S] cluster</name>
        <dbReference type="ChEBI" id="CHEBI:190135"/>
    </ligand>
</feature>
<reference key="1">
    <citation type="journal article" date="2006" name="Appl. Environ. Microbiol.">
        <title>Characterization of the terephthalate degradation genes of Comamonas sp. strain E6.</title>
        <authorList>
            <person name="Sasoh M."/>
            <person name="Masai E."/>
            <person name="Ishibashi S."/>
            <person name="Hara H."/>
            <person name="Kamimura N."/>
            <person name="Miyauchi K."/>
            <person name="Fukuda M."/>
        </authorList>
    </citation>
    <scope>NUCLEOTIDE SEQUENCE [GENOMIC DNA]</scope>
    <scope>FUNCTION AS A TEREPHTHALATE DIOXYGENASE</scope>
    <scope>FUNCTION IN TPA DEGRADATION</scope>
    <scope>SUBUNIT</scope>
    <scope>COFACTOR</scope>
    <source>
        <strain>E6</strain>
    </source>
</reference>
<reference key="2">
    <citation type="journal article" date="2008" name="Biosci. Biotechnol. Biochem.">
        <title>Enzymatic properties of terephthalate 1,2-dioxygenase of Comamonas sp. strain E6.</title>
        <authorList>
            <person name="Fukuhara Y."/>
            <person name="Kasai D."/>
            <person name="Katayama Y."/>
            <person name="Fukuda M."/>
            <person name="Masai E."/>
        </authorList>
    </citation>
    <scope>FUNCTION AS A TEREPHTHALATE DIOXYGENASE</scope>
    <scope>CATALYTIC ACTIVITY</scope>
    <scope>BIOPHYSICOCHEMICAL PROPERTIES</scope>
    <scope>SUBSTRATE SPECIFICITY</scope>
    <scope>SUBUNIT</scope>
    <scope>COFACTOR</scope>
    <source>
        <strain>E6</strain>
    </source>
</reference>